<feature type="chain" id="PRO_0000091894" description="Forkhead box protein S1">
    <location>
        <begin position="1"/>
        <end position="329"/>
    </location>
</feature>
<feature type="DNA-binding region" description="Fork-head" evidence="1">
    <location>
        <begin position="17"/>
        <end position="108"/>
    </location>
</feature>
<feature type="region of interest" description="Disordered" evidence="2">
    <location>
        <begin position="117"/>
        <end position="150"/>
    </location>
</feature>
<feature type="region of interest" description="Disordered" evidence="2">
    <location>
        <begin position="174"/>
        <end position="213"/>
    </location>
</feature>
<feature type="compositionally biased region" description="Polar residues" evidence="2">
    <location>
        <begin position="175"/>
        <end position="184"/>
    </location>
</feature>
<evidence type="ECO:0000255" key="1">
    <source>
        <dbReference type="PROSITE-ProRule" id="PRU00089"/>
    </source>
</evidence>
<evidence type="ECO:0000256" key="2">
    <source>
        <dbReference type="SAM" id="MobiDB-lite"/>
    </source>
</evidence>
<evidence type="ECO:0000269" key="3">
    <source>
    </source>
</evidence>
<organism>
    <name type="scientific">Mus musculus</name>
    <name type="common">Mouse</name>
    <dbReference type="NCBI Taxonomy" id="10090"/>
    <lineage>
        <taxon>Eukaryota</taxon>
        <taxon>Metazoa</taxon>
        <taxon>Chordata</taxon>
        <taxon>Craniata</taxon>
        <taxon>Vertebrata</taxon>
        <taxon>Euteleostomi</taxon>
        <taxon>Mammalia</taxon>
        <taxon>Eutheria</taxon>
        <taxon>Euarchontoglires</taxon>
        <taxon>Glires</taxon>
        <taxon>Rodentia</taxon>
        <taxon>Myomorpha</taxon>
        <taxon>Muroidea</taxon>
        <taxon>Muridae</taxon>
        <taxon>Murinae</taxon>
        <taxon>Mus</taxon>
        <taxon>Mus</taxon>
    </lineage>
</organism>
<comment type="function">
    <text evidence="3">Transcriptional repressor that suppresses transcription from the FASLG, FOXO3 and FOXO4 promoters. May have a role in the organization of the testicular vasculature.</text>
</comment>
<comment type="subcellular location">
    <subcellularLocation>
        <location evidence="1 3">Nucleus</location>
    </subcellularLocation>
</comment>
<comment type="developmental stage">
    <text evidence="3">Expressed in the testis in Sertoli and periendothelial cells at 14 dpc.</text>
</comment>
<comment type="disruption phenotype">
    <text evidence="3">Accumulation of blood in the central part of the fetal testis. Increased ectopic apoptosis in periendothelial cells of the testis.</text>
</comment>
<reference key="1">
    <citation type="journal article" date="2005" name="Science">
        <title>The transcriptional landscape of the mammalian genome.</title>
        <authorList>
            <person name="Carninci P."/>
            <person name="Kasukawa T."/>
            <person name="Katayama S."/>
            <person name="Gough J."/>
            <person name="Frith M.C."/>
            <person name="Maeda N."/>
            <person name="Oyama R."/>
            <person name="Ravasi T."/>
            <person name="Lenhard B."/>
            <person name="Wells C."/>
            <person name="Kodzius R."/>
            <person name="Shimokawa K."/>
            <person name="Bajic V.B."/>
            <person name="Brenner S.E."/>
            <person name="Batalov S."/>
            <person name="Forrest A.R."/>
            <person name="Zavolan M."/>
            <person name="Davis M.J."/>
            <person name="Wilming L.G."/>
            <person name="Aidinis V."/>
            <person name="Allen J.E."/>
            <person name="Ambesi-Impiombato A."/>
            <person name="Apweiler R."/>
            <person name="Aturaliya R.N."/>
            <person name="Bailey T.L."/>
            <person name="Bansal M."/>
            <person name="Baxter L."/>
            <person name="Beisel K.W."/>
            <person name="Bersano T."/>
            <person name="Bono H."/>
            <person name="Chalk A.M."/>
            <person name="Chiu K.P."/>
            <person name="Choudhary V."/>
            <person name="Christoffels A."/>
            <person name="Clutterbuck D.R."/>
            <person name="Crowe M.L."/>
            <person name="Dalla E."/>
            <person name="Dalrymple B.P."/>
            <person name="de Bono B."/>
            <person name="Della Gatta G."/>
            <person name="di Bernardo D."/>
            <person name="Down T."/>
            <person name="Engstrom P."/>
            <person name="Fagiolini M."/>
            <person name="Faulkner G."/>
            <person name="Fletcher C.F."/>
            <person name="Fukushima T."/>
            <person name="Furuno M."/>
            <person name="Futaki S."/>
            <person name="Gariboldi M."/>
            <person name="Georgii-Hemming P."/>
            <person name="Gingeras T.R."/>
            <person name="Gojobori T."/>
            <person name="Green R.E."/>
            <person name="Gustincich S."/>
            <person name="Harbers M."/>
            <person name="Hayashi Y."/>
            <person name="Hensch T.K."/>
            <person name="Hirokawa N."/>
            <person name="Hill D."/>
            <person name="Huminiecki L."/>
            <person name="Iacono M."/>
            <person name="Ikeo K."/>
            <person name="Iwama A."/>
            <person name="Ishikawa T."/>
            <person name="Jakt M."/>
            <person name="Kanapin A."/>
            <person name="Katoh M."/>
            <person name="Kawasawa Y."/>
            <person name="Kelso J."/>
            <person name="Kitamura H."/>
            <person name="Kitano H."/>
            <person name="Kollias G."/>
            <person name="Krishnan S.P."/>
            <person name="Kruger A."/>
            <person name="Kummerfeld S.K."/>
            <person name="Kurochkin I.V."/>
            <person name="Lareau L.F."/>
            <person name="Lazarevic D."/>
            <person name="Lipovich L."/>
            <person name="Liu J."/>
            <person name="Liuni S."/>
            <person name="McWilliam S."/>
            <person name="Madan Babu M."/>
            <person name="Madera M."/>
            <person name="Marchionni L."/>
            <person name="Matsuda H."/>
            <person name="Matsuzawa S."/>
            <person name="Miki H."/>
            <person name="Mignone F."/>
            <person name="Miyake S."/>
            <person name="Morris K."/>
            <person name="Mottagui-Tabar S."/>
            <person name="Mulder N."/>
            <person name="Nakano N."/>
            <person name="Nakauchi H."/>
            <person name="Ng P."/>
            <person name="Nilsson R."/>
            <person name="Nishiguchi S."/>
            <person name="Nishikawa S."/>
            <person name="Nori F."/>
            <person name="Ohara O."/>
            <person name="Okazaki Y."/>
            <person name="Orlando V."/>
            <person name="Pang K.C."/>
            <person name="Pavan W.J."/>
            <person name="Pavesi G."/>
            <person name="Pesole G."/>
            <person name="Petrovsky N."/>
            <person name="Piazza S."/>
            <person name="Reed J."/>
            <person name="Reid J.F."/>
            <person name="Ring B.Z."/>
            <person name="Ringwald M."/>
            <person name="Rost B."/>
            <person name="Ruan Y."/>
            <person name="Salzberg S.L."/>
            <person name="Sandelin A."/>
            <person name="Schneider C."/>
            <person name="Schoenbach C."/>
            <person name="Sekiguchi K."/>
            <person name="Semple C.A."/>
            <person name="Seno S."/>
            <person name="Sessa L."/>
            <person name="Sheng Y."/>
            <person name="Shibata Y."/>
            <person name="Shimada H."/>
            <person name="Shimada K."/>
            <person name="Silva D."/>
            <person name="Sinclair B."/>
            <person name="Sperling S."/>
            <person name="Stupka E."/>
            <person name="Sugiura K."/>
            <person name="Sultana R."/>
            <person name="Takenaka Y."/>
            <person name="Taki K."/>
            <person name="Tammoja K."/>
            <person name="Tan S.L."/>
            <person name="Tang S."/>
            <person name="Taylor M.S."/>
            <person name="Tegner J."/>
            <person name="Teichmann S.A."/>
            <person name="Ueda H.R."/>
            <person name="van Nimwegen E."/>
            <person name="Verardo R."/>
            <person name="Wei C.L."/>
            <person name="Yagi K."/>
            <person name="Yamanishi H."/>
            <person name="Zabarovsky E."/>
            <person name="Zhu S."/>
            <person name="Zimmer A."/>
            <person name="Hide W."/>
            <person name="Bult C."/>
            <person name="Grimmond S.M."/>
            <person name="Teasdale R.D."/>
            <person name="Liu E.T."/>
            <person name="Brusic V."/>
            <person name="Quackenbush J."/>
            <person name="Wahlestedt C."/>
            <person name="Mattick J.S."/>
            <person name="Hume D.A."/>
            <person name="Kai C."/>
            <person name="Sasaki D."/>
            <person name="Tomaru Y."/>
            <person name="Fukuda S."/>
            <person name="Kanamori-Katayama M."/>
            <person name="Suzuki M."/>
            <person name="Aoki J."/>
            <person name="Arakawa T."/>
            <person name="Iida J."/>
            <person name="Imamura K."/>
            <person name="Itoh M."/>
            <person name="Kato T."/>
            <person name="Kawaji H."/>
            <person name="Kawagashira N."/>
            <person name="Kawashima T."/>
            <person name="Kojima M."/>
            <person name="Kondo S."/>
            <person name="Konno H."/>
            <person name="Nakano K."/>
            <person name="Ninomiya N."/>
            <person name="Nishio T."/>
            <person name="Okada M."/>
            <person name="Plessy C."/>
            <person name="Shibata K."/>
            <person name="Shiraki T."/>
            <person name="Suzuki S."/>
            <person name="Tagami M."/>
            <person name="Waki K."/>
            <person name="Watahiki A."/>
            <person name="Okamura-Oho Y."/>
            <person name="Suzuki H."/>
            <person name="Kawai J."/>
            <person name="Hayashizaki Y."/>
        </authorList>
    </citation>
    <scope>NUCLEOTIDE SEQUENCE [LARGE SCALE MRNA]</scope>
    <source>
        <strain>C57BL/6J</strain>
        <tissue>Testis</tissue>
    </source>
</reference>
<reference key="2">
    <citation type="journal article" date="1993" name="Proc. Natl. Acad. Sci. U.S.A.">
        <title>Six members of the mouse forkhead gene family are developmentally regulated.</title>
        <authorList>
            <person name="Kaestner K.H."/>
            <person name="Lee K.H."/>
            <person name="Schloendorff J."/>
            <person name="Hiemisch H."/>
            <person name="Monaghan A.P."/>
            <person name="Schuetz G."/>
        </authorList>
    </citation>
    <scope>NUCLEOTIDE SEQUENCE [GENOMIC DNA] OF 9-119</scope>
    <source>
        <strain>129</strain>
    </source>
</reference>
<reference key="3">
    <citation type="journal article" date="2008" name="Mol. Reprod. Dev.">
        <title>Importance of forkhead transcription factor Fkhl18 for development of testicular vasculature.</title>
        <authorList>
            <person name="Sato Y."/>
            <person name="Baba T."/>
            <person name="Zubair M."/>
            <person name="Miyabayashi K."/>
            <person name="Toyama Y."/>
            <person name="Maekawa M."/>
            <person name="Owaki A."/>
            <person name="Mizusaki H."/>
            <person name="Sawamura T."/>
            <person name="Toshimori K."/>
            <person name="Morohashi K."/>
            <person name="Katoh-Fukui Y."/>
        </authorList>
    </citation>
    <scope>FUNCTION</scope>
    <scope>SUBCELLULAR LOCATION</scope>
    <scope>DISRUPTION PHENOTYPE</scope>
    <scope>DEVELOPMENTAL STAGE</scope>
</reference>
<accession>Q61574</accession>
<accession>Q8C5N7</accession>
<proteinExistence type="evidence at transcript level"/>
<sequence length="329" mass="35567">MQKQPSPESLAPSAEPTKPPYSYIALIAMAIQSSPGQRATLSGIYRYIMGRFAFYRHNRPGWQNSIRHNLSLNECFVKVPRDDRKPGKGSYWTLDPDCHDMFQHGSFLRRRRRFTKRTGAQGTKGPVKIDHRPHRATSPDPGAPKTTTGRLCPFPQEVPNPKGLSFEGLMGSLPANMSSTTSDVRPQLPTGPKEMCSAKSGGPRELSEATSPSPCPAFGFSSAFSDAESLGKAPTPGVAPESVGSSYQCRMQTLNFCMGTDPGLEHLLVSSVPTPGSSTPSASHRAPLPLPADSKEPWVAGSFPVQGGSGYPLGLPPCLYRTPGMFFFE</sequence>
<protein>
    <recommendedName>
        <fullName>Forkhead box protein S1</fullName>
    </recommendedName>
    <alternativeName>
        <fullName>Forkhead-like 18 protein</fullName>
    </alternativeName>
    <alternativeName>
        <fullName>Forkhead-related transcription factor 10</fullName>
        <shortName>FREAC-10</shortName>
    </alternativeName>
    <alternativeName>
        <fullName>Transcription factor FKH-3</fullName>
    </alternativeName>
</protein>
<keyword id="KW-0238">DNA-binding</keyword>
<keyword id="KW-0539">Nucleus</keyword>
<keyword id="KW-1185">Reference proteome</keyword>
<keyword id="KW-0678">Repressor</keyword>
<keyword id="KW-0804">Transcription</keyword>
<keyword id="KW-0805">Transcription regulation</keyword>
<dbReference type="EMBL" id="AK077935">
    <property type="protein sequence ID" value="BAC37074.1"/>
    <property type="molecule type" value="mRNA"/>
</dbReference>
<dbReference type="EMBL" id="X71941">
    <property type="protein sequence ID" value="CAA50743.1"/>
    <property type="molecule type" value="Genomic_DNA"/>
</dbReference>
<dbReference type="CCDS" id="CCDS16901.1"/>
<dbReference type="PIR" id="C47746">
    <property type="entry name" value="C47746"/>
</dbReference>
<dbReference type="RefSeq" id="NP_034356.1">
    <property type="nucleotide sequence ID" value="NM_010226.2"/>
</dbReference>
<dbReference type="SMR" id="Q61574"/>
<dbReference type="FunCoup" id="Q61574">
    <property type="interactions" value="217"/>
</dbReference>
<dbReference type="STRING" id="10090.ENSMUSP00000096806"/>
<dbReference type="GlyGen" id="Q61574">
    <property type="glycosylation" value="3 sites"/>
</dbReference>
<dbReference type="iPTMnet" id="Q61574"/>
<dbReference type="PhosphoSitePlus" id="Q61574"/>
<dbReference type="PaxDb" id="10090-ENSMUSP00000096806"/>
<dbReference type="ProteomicsDB" id="267622"/>
<dbReference type="Antibodypedia" id="25256">
    <property type="antibodies" value="79 antibodies from 21 providers"/>
</dbReference>
<dbReference type="DNASU" id="14239"/>
<dbReference type="Ensembl" id="ENSMUST00000099200.3">
    <property type="protein sequence ID" value="ENSMUSP00000096806.3"/>
    <property type="gene ID" value="ENSMUSG00000074676.3"/>
</dbReference>
<dbReference type="GeneID" id="14239"/>
<dbReference type="KEGG" id="mmu:14239"/>
<dbReference type="UCSC" id="uc008ngt.1">
    <property type="organism name" value="mouse"/>
</dbReference>
<dbReference type="AGR" id="MGI:95546"/>
<dbReference type="CTD" id="2307"/>
<dbReference type="MGI" id="MGI:95546">
    <property type="gene designation" value="Foxs1"/>
</dbReference>
<dbReference type="VEuPathDB" id="HostDB:ENSMUSG00000074676"/>
<dbReference type="eggNOG" id="KOG2294">
    <property type="taxonomic scope" value="Eukaryota"/>
</dbReference>
<dbReference type="GeneTree" id="ENSGT00940000162811"/>
<dbReference type="HOGENOM" id="CLU_839247_0_0_1"/>
<dbReference type="InParanoid" id="Q61574"/>
<dbReference type="OMA" id="QKEPWGP"/>
<dbReference type="OrthoDB" id="5954824at2759"/>
<dbReference type="PhylomeDB" id="Q61574"/>
<dbReference type="TreeFam" id="TF316127"/>
<dbReference type="BioGRID-ORCS" id="14239">
    <property type="hits" value="3 hits in 79 CRISPR screens"/>
</dbReference>
<dbReference type="PRO" id="PR:Q61574"/>
<dbReference type="Proteomes" id="UP000000589">
    <property type="component" value="Chromosome 2"/>
</dbReference>
<dbReference type="RNAct" id="Q61574">
    <property type="molecule type" value="protein"/>
</dbReference>
<dbReference type="Bgee" id="ENSMUSG00000074676">
    <property type="expression patterns" value="Expressed in ureteric bud trunk and 77 other cell types or tissues"/>
</dbReference>
<dbReference type="ExpressionAtlas" id="Q61574">
    <property type="expression patterns" value="baseline and differential"/>
</dbReference>
<dbReference type="GO" id="GO:0005634">
    <property type="term" value="C:nucleus"/>
    <property type="evidence" value="ECO:0000314"/>
    <property type="project" value="UniProtKB"/>
</dbReference>
<dbReference type="GO" id="GO:0003677">
    <property type="term" value="F:DNA binding"/>
    <property type="evidence" value="ECO:0000314"/>
    <property type="project" value="UniProtKB"/>
</dbReference>
<dbReference type="GO" id="GO:0001227">
    <property type="term" value="F:DNA-binding transcription repressor activity, RNA polymerase II-specific"/>
    <property type="evidence" value="ECO:0000314"/>
    <property type="project" value="NTNU_SB"/>
</dbReference>
<dbReference type="GO" id="GO:0000978">
    <property type="term" value="F:RNA polymerase II cis-regulatory region sequence-specific DNA binding"/>
    <property type="evidence" value="ECO:0000314"/>
    <property type="project" value="NTNU_SB"/>
</dbReference>
<dbReference type="GO" id="GO:0001568">
    <property type="term" value="P:blood vessel development"/>
    <property type="evidence" value="ECO:0000315"/>
    <property type="project" value="UniProtKB"/>
</dbReference>
<dbReference type="GO" id="GO:0043433">
    <property type="term" value="P:negative regulation of DNA-binding transcription factor activity"/>
    <property type="evidence" value="ECO:0000314"/>
    <property type="project" value="UniProtKB"/>
</dbReference>
<dbReference type="GO" id="GO:0045892">
    <property type="term" value="P:negative regulation of DNA-templated transcription"/>
    <property type="evidence" value="ECO:0000314"/>
    <property type="project" value="UniProtKB"/>
</dbReference>
<dbReference type="GO" id="GO:0000122">
    <property type="term" value="P:negative regulation of transcription by RNA polymerase II"/>
    <property type="evidence" value="ECO:0000314"/>
    <property type="project" value="NTNU_SB"/>
</dbReference>
<dbReference type="GO" id="GO:0050885">
    <property type="term" value="P:neuromuscular process controlling balance"/>
    <property type="evidence" value="ECO:0000315"/>
    <property type="project" value="MGI"/>
</dbReference>
<dbReference type="GO" id="GO:0040018">
    <property type="term" value="P:positive regulation of multicellular organism growth"/>
    <property type="evidence" value="ECO:0000315"/>
    <property type="project" value="MGI"/>
</dbReference>
<dbReference type="CDD" id="cd20037">
    <property type="entry name" value="FH_FOXS1"/>
    <property type="match status" value="1"/>
</dbReference>
<dbReference type="FunFam" id="1.10.10.10:FF:000016">
    <property type="entry name" value="Forkhead box protein I1"/>
    <property type="match status" value="1"/>
</dbReference>
<dbReference type="Gene3D" id="1.10.10.10">
    <property type="entry name" value="Winged helix-like DNA-binding domain superfamily/Winged helix DNA-binding domain"/>
    <property type="match status" value="1"/>
</dbReference>
<dbReference type="InterPro" id="IPR047364">
    <property type="entry name" value="FH_FOXS1"/>
</dbReference>
<dbReference type="InterPro" id="IPR001766">
    <property type="entry name" value="Fork_head_dom"/>
</dbReference>
<dbReference type="InterPro" id="IPR050211">
    <property type="entry name" value="FOX_domain-containing"/>
</dbReference>
<dbReference type="InterPro" id="IPR018122">
    <property type="entry name" value="TF_fork_head_CS_1"/>
</dbReference>
<dbReference type="InterPro" id="IPR030456">
    <property type="entry name" value="TF_fork_head_CS_2"/>
</dbReference>
<dbReference type="InterPro" id="IPR036388">
    <property type="entry name" value="WH-like_DNA-bd_sf"/>
</dbReference>
<dbReference type="InterPro" id="IPR036390">
    <property type="entry name" value="WH_DNA-bd_sf"/>
</dbReference>
<dbReference type="PANTHER" id="PTHR11829">
    <property type="entry name" value="FORKHEAD BOX PROTEIN"/>
    <property type="match status" value="1"/>
</dbReference>
<dbReference type="PANTHER" id="PTHR11829:SF370">
    <property type="entry name" value="FORKHEAD BOX PROTEIN S1"/>
    <property type="match status" value="1"/>
</dbReference>
<dbReference type="Pfam" id="PF00250">
    <property type="entry name" value="Forkhead"/>
    <property type="match status" value="1"/>
</dbReference>
<dbReference type="PRINTS" id="PR00053">
    <property type="entry name" value="FORKHEAD"/>
</dbReference>
<dbReference type="SMART" id="SM00339">
    <property type="entry name" value="FH"/>
    <property type="match status" value="1"/>
</dbReference>
<dbReference type="SUPFAM" id="SSF46785">
    <property type="entry name" value="Winged helix' DNA-binding domain"/>
    <property type="match status" value="1"/>
</dbReference>
<dbReference type="PROSITE" id="PS00657">
    <property type="entry name" value="FORK_HEAD_1"/>
    <property type="match status" value="1"/>
</dbReference>
<dbReference type="PROSITE" id="PS00658">
    <property type="entry name" value="FORK_HEAD_2"/>
    <property type="match status" value="1"/>
</dbReference>
<dbReference type="PROSITE" id="PS50039">
    <property type="entry name" value="FORK_HEAD_3"/>
    <property type="match status" value="1"/>
</dbReference>
<name>FOXS1_MOUSE</name>
<gene>
    <name type="primary">Foxs1</name>
    <name type="synonym">Fkh3</name>
    <name type="synonym">Fkhl18</name>
    <name type="synonym">Freac10</name>
</gene>